<keyword id="KW-0067">ATP-binding</keyword>
<keyword id="KW-0963">Cytoplasm</keyword>
<keyword id="KW-0436">Ligase</keyword>
<keyword id="KW-0547">Nucleotide-binding</keyword>
<keyword id="KW-0694">RNA-binding</keyword>
<keyword id="KW-0819">tRNA processing</keyword>
<keyword id="KW-0820">tRNA-binding</keyword>
<name>TMCAL_STRS7</name>
<comment type="function">
    <text evidence="1">Catalyzes the formation of N(4)-acetylcytidine (ac(4)C) at the wobble position of elongator tRNA(Met), using acetate and ATP as substrates. First activates an acetate ion to form acetyladenylate (Ac-AMP) and then transfers the acetyl group to tRNA to form ac(4)C34.</text>
</comment>
<comment type="catalytic activity">
    <reaction evidence="1">
        <text>cytidine(34) in elongator tRNA(Met) + acetate + ATP = N(4)-acetylcytidine(34) in elongator tRNA(Met) + AMP + diphosphate</text>
        <dbReference type="Rhea" id="RHEA:58144"/>
        <dbReference type="Rhea" id="RHEA-COMP:10693"/>
        <dbReference type="Rhea" id="RHEA-COMP:10694"/>
        <dbReference type="ChEBI" id="CHEBI:30089"/>
        <dbReference type="ChEBI" id="CHEBI:30616"/>
        <dbReference type="ChEBI" id="CHEBI:33019"/>
        <dbReference type="ChEBI" id="CHEBI:74900"/>
        <dbReference type="ChEBI" id="CHEBI:82748"/>
        <dbReference type="ChEBI" id="CHEBI:456215"/>
    </reaction>
</comment>
<comment type="subcellular location">
    <subcellularLocation>
        <location evidence="1">Cytoplasm</location>
    </subcellularLocation>
</comment>
<comment type="similarity">
    <text evidence="1">Belongs to the TmcAL family.</text>
</comment>
<feature type="chain" id="PRO_1000215430" description="tRNA(Met) cytidine acetate ligase">
    <location>
        <begin position="1"/>
        <end position="366"/>
    </location>
</feature>
<feature type="binding site" evidence="1">
    <location>
        <begin position="7"/>
        <end position="20"/>
    </location>
    <ligand>
        <name>ATP</name>
        <dbReference type="ChEBI" id="CHEBI:30616"/>
    </ligand>
</feature>
<feature type="binding site" evidence="1">
    <location>
        <position position="96"/>
    </location>
    <ligand>
        <name>ATP</name>
        <dbReference type="ChEBI" id="CHEBI:30616"/>
    </ligand>
</feature>
<feature type="binding site" evidence="1">
    <location>
        <position position="152"/>
    </location>
    <ligand>
        <name>ATP</name>
        <dbReference type="ChEBI" id="CHEBI:30616"/>
    </ligand>
</feature>
<feature type="binding site" evidence="1">
    <location>
        <position position="175"/>
    </location>
    <ligand>
        <name>ATP</name>
        <dbReference type="ChEBI" id="CHEBI:30616"/>
    </ligand>
</feature>
<evidence type="ECO:0000255" key="1">
    <source>
        <dbReference type="HAMAP-Rule" id="MF_01539"/>
    </source>
</evidence>
<protein>
    <recommendedName>
        <fullName evidence="1">tRNA(Met) cytidine acetate ligase</fullName>
        <ecNumber evidence="1">6.3.4.-</ecNumber>
    </recommendedName>
</protein>
<dbReference type="EC" id="6.3.4.-" evidence="1"/>
<dbReference type="EMBL" id="FM204884">
    <property type="protein sequence ID" value="CAW98082.1"/>
    <property type="molecule type" value="Genomic_DNA"/>
</dbReference>
<dbReference type="SMR" id="C0MG35"/>
<dbReference type="KEGG" id="seq:SZO_02910"/>
<dbReference type="eggNOG" id="COG1323">
    <property type="taxonomic scope" value="Bacteria"/>
</dbReference>
<dbReference type="HOGENOM" id="CLU_038915_0_2_9"/>
<dbReference type="Proteomes" id="UP000001368">
    <property type="component" value="Chromosome"/>
</dbReference>
<dbReference type="GO" id="GO:0005737">
    <property type="term" value="C:cytoplasm"/>
    <property type="evidence" value="ECO:0007669"/>
    <property type="project" value="UniProtKB-SubCell"/>
</dbReference>
<dbReference type="GO" id="GO:0005524">
    <property type="term" value="F:ATP binding"/>
    <property type="evidence" value="ECO:0007669"/>
    <property type="project" value="UniProtKB-KW"/>
</dbReference>
<dbReference type="GO" id="GO:0016879">
    <property type="term" value="F:ligase activity, forming carbon-nitrogen bonds"/>
    <property type="evidence" value="ECO:0007669"/>
    <property type="project" value="UniProtKB-UniRule"/>
</dbReference>
<dbReference type="GO" id="GO:0000049">
    <property type="term" value="F:tRNA binding"/>
    <property type="evidence" value="ECO:0007669"/>
    <property type="project" value="UniProtKB-KW"/>
</dbReference>
<dbReference type="GO" id="GO:0006400">
    <property type="term" value="P:tRNA modification"/>
    <property type="evidence" value="ECO:0007669"/>
    <property type="project" value="UniProtKB-UniRule"/>
</dbReference>
<dbReference type="Gene3D" id="3.40.50.620">
    <property type="entry name" value="HUPs"/>
    <property type="match status" value="1"/>
</dbReference>
<dbReference type="HAMAP" id="MF_01539">
    <property type="entry name" value="TmcAL"/>
    <property type="match status" value="1"/>
</dbReference>
<dbReference type="InterPro" id="IPR014729">
    <property type="entry name" value="Rossmann-like_a/b/a_fold"/>
</dbReference>
<dbReference type="InterPro" id="IPR008513">
    <property type="entry name" value="tRNA(Met)_cyd_acetate_ligase"/>
</dbReference>
<dbReference type="NCBIfam" id="NF010191">
    <property type="entry name" value="PRK13670.1"/>
    <property type="match status" value="1"/>
</dbReference>
<dbReference type="PANTHER" id="PTHR37825">
    <property type="entry name" value="TRNA(MET) CYTIDINE ACETATE LIGASE"/>
    <property type="match status" value="1"/>
</dbReference>
<dbReference type="PANTHER" id="PTHR37825:SF1">
    <property type="entry name" value="TRNA(MET) CYTIDINE ACETATE LIGASE"/>
    <property type="match status" value="1"/>
</dbReference>
<dbReference type="Pfam" id="PF05636">
    <property type="entry name" value="HIGH_NTase1"/>
    <property type="match status" value="1"/>
</dbReference>
<dbReference type="SUPFAM" id="SSF52374">
    <property type="entry name" value="Nucleotidylyl transferase"/>
    <property type="match status" value="1"/>
</dbReference>
<reference key="1">
    <citation type="journal article" date="2009" name="PLoS Pathog.">
        <title>Genomic evidence for the evolution of Streptococcus equi: host restriction, increased virulence, and genetic exchange with human pathogens.</title>
        <authorList>
            <person name="Holden M.T.G."/>
            <person name="Heather Z."/>
            <person name="Paillot R."/>
            <person name="Steward K.F."/>
            <person name="Webb K."/>
            <person name="Ainslie F."/>
            <person name="Jourdan T."/>
            <person name="Bason N.C."/>
            <person name="Holroyd N.E."/>
            <person name="Mungall K."/>
            <person name="Quail M.A."/>
            <person name="Sanders M."/>
            <person name="Simmonds M."/>
            <person name="Willey D."/>
            <person name="Brooks K."/>
            <person name="Aanensen D.M."/>
            <person name="Spratt B.G."/>
            <person name="Jolley K.A."/>
            <person name="Maiden M.C.J."/>
            <person name="Kehoe M."/>
            <person name="Chanter N."/>
            <person name="Bentley S.D."/>
            <person name="Robinson C."/>
            <person name="Maskell D.J."/>
            <person name="Parkhill J."/>
            <person name="Waller A.S."/>
        </authorList>
    </citation>
    <scope>NUCLEOTIDE SEQUENCE [LARGE SCALE GENOMIC DNA]</scope>
    <source>
        <strain>H70</strain>
    </source>
</reference>
<accession>C0MG35</accession>
<organism>
    <name type="scientific">Streptococcus equi subsp. zooepidemicus (strain H70)</name>
    <dbReference type="NCBI Taxonomy" id="553483"/>
    <lineage>
        <taxon>Bacteria</taxon>
        <taxon>Bacillati</taxon>
        <taxon>Bacillota</taxon>
        <taxon>Bacilli</taxon>
        <taxon>Lactobacillales</taxon>
        <taxon>Streptococcaceae</taxon>
        <taxon>Streptococcus</taxon>
    </lineage>
</organism>
<sequence length="366" mass="40649">MTVTGIIAEFNPFHYGHQYLLSQARGLKIVAMSGNFVQRGEPALVDKWVRAQMALENGADLVVELPFLVSVQSADYFAQGAVDILMRLGIDTLAFGTEQLFDYQKLSRLYSEQAEHMTAYLAALPDHLSYPQKTQSMWEAFAGLSATGDRPNHLLALSYVKASAGKKLQLQPIKRLGAGFHSEAKDQCLSSATAIRKHIADRAFVEKSSPNAALILRAPQVTWEHYFPLLKYHILTSPDLTEFFQVNDELASRISAAIRSIATVDELVEAVATKHYTKARVRRVLTYILVKAVEAPLPEGIHVLGFSKKGQAHLKTIKASVPLISRIGAKPWDQLTQRADTVYQLGHMDMPEQTWGRVPIRPGAMN</sequence>
<proteinExistence type="inferred from homology"/>
<gene>
    <name evidence="1" type="primary">tmcAL</name>
    <name type="ordered locus">SZO_02910</name>
</gene>